<organism>
    <name type="scientific">Daucus carota</name>
    <name type="common">Wild carrot</name>
    <dbReference type="NCBI Taxonomy" id="4039"/>
    <lineage>
        <taxon>Eukaryota</taxon>
        <taxon>Viridiplantae</taxon>
        <taxon>Streptophyta</taxon>
        <taxon>Embryophyta</taxon>
        <taxon>Tracheophyta</taxon>
        <taxon>Spermatophyta</taxon>
        <taxon>Magnoliopsida</taxon>
        <taxon>eudicotyledons</taxon>
        <taxon>Gunneridae</taxon>
        <taxon>Pentapetalae</taxon>
        <taxon>asterids</taxon>
        <taxon>campanulids</taxon>
        <taxon>Apiales</taxon>
        <taxon>Apiaceae</taxon>
        <taxon>Apioideae</taxon>
        <taxon>Scandiceae</taxon>
        <taxon>Daucinae</taxon>
        <taxon>Daucus</taxon>
        <taxon>Daucus sect. Daucus</taxon>
    </lineage>
</organism>
<sequence>MGLSFTKLFSRLFAKKEMRILMVGLDAAGKTTILYKLKLGEIVTTIPTIGFNVETVEYKNISFTVWDVGGQDKIRPLWRHYFQNTQGLIFVVDSNDRDRVVEARDELHRMLNEDELRDAVLLVFANKQDLPNAMNAAEIIDKLGLHSLRQRHWYIQSTCATSGEGLYEGLDWLSNNIASKS</sequence>
<comment type="function">
    <text>GTP-binding protein involved in protein trafficking; may modulate vesicle budding and uncoating within the Golgi apparatus.</text>
</comment>
<comment type="catalytic activity">
    <reaction evidence="2">
        <text>GTP + H2O = GDP + phosphate + H(+)</text>
        <dbReference type="Rhea" id="RHEA:19669"/>
        <dbReference type="ChEBI" id="CHEBI:15377"/>
        <dbReference type="ChEBI" id="CHEBI:15378"/>
        <dbReference type="ChEBI" id="CHEBI:37565"/>
        <dbReference type="ChEBI" id="CHEBI:43474"/>
        <dbReference type="ChEBI" id="CHEBI:58189"/>
        <dbReference type="EC" id="3.6.5.2"/>
    </reaction>
</comment>
<comment type="subcellular location">
    <subcellularLocation>
        <location>Golgi apparatus</location>
    </subcellularLocation>
</comment>
<comment type="similarity">
    <text evidence="4">Belongs to the small GTPase superfamily. Arf family.</text>
</comment>
<protein>
    <recommendedName>
        <fullName>ADP-ribosylation factor 1</fullName>
        <ecNumber evidence="2">3.6.5.2</ecNumber>
    </recommendedName>
</protein>
<reference key="1">
    <citation type="journal article" date="1995" name="Plant Cell Physiol.">
        <title>Cloning of a carrot cDNA for a member of the family of ADP-ribosylation factors (ARFs) and characterization of the binding of nucleotides by its product after expression in E. coli.</title>
        <authorList>
            <person name="Kiyosue T."/>
            <person name="Shinozaki K."/>
        </authorList>
    </citation>
    <scope>NUCLEOTIDE SEQUENCE [MRNA]</scope>
    <source>
        <strain>cv. US-Harumakigosun</strain>
    </source>
</reference>
<feature type="initiator methionine" description="Removed" evidence="3">
    <location>
        <position position="1"/>
    </location>
</feature>
<feature type="chain" id="PRO_0000207434" description="ADP-ribosylation factor 1">
    <location>
        <begin position="2"/>
        <end position="181"/>
    </location>
</feature>
<feature type="binding site" evidence="1">
    <location>
        <begin position="24"/>
        <end position="31"/>
    </location>
    <ligand>
        <name>GTP</name>
        <dbReference type="ChEBI" id="CHEBI:37565"/>
    </ligand>
</feature>
<feature type="binding site" evidence="1">
    <location>
        <begin position="67"/>
        <end position="71"/>
    </location>
    <ligand>
        <name>GTP</name>
        <dbReference type="ChEBI" id="CHEBI:37565"/>
    </ligand>
</feature>
<feature type="binding site" evidence="1">
    <location>
        <begin position="126"/>
        <end position="129"/>
    </location>
    <ligand>
        <name>GTP</name>
        <dbReference type="ChEBI" id="CHEBI:37565"/>
    </ligand>
</feature>
<feature type="lipid moiety-binding region" description="N-myristoyl glycine" evidence="3">
    <location>
        <position position="2"/>
    </location>
</feature>
<keyword id="KW-0931">ER-Golgi transport</keyword>
<keyword id="KW-0333">Golgi apparatus</keyword>
<keyword id="KW-0342">GTP-binding</keyword>
<keyword id="KW-0378">Hydrolase</keyword>
<keyword id="KW-0449">Lipoprotein</keyword>
<keyword id="KW-0519">Myristate</keyword>
<keyword id="KW-0547">Nucleotide-binding</keyword>
<keyword id="KW-0653">Protein transport</keyword>
<keyword id="KW-0813">Transport</keyword>
<evidence type="ECO:0000250" key="1"/>
<evidence type="ECO:0000250" key="2">
    <source>
        <dbReference type="UniProtKB" id="P84077"/>
    </source>
</evidence>
<evidence type="ECO:0000255" key="3"/>
<evidence type="ECO:0000305" key="4"/>
<name>ARF1_DAUCA</name>
<gene>
    <name type="primary">ARF1</name>
</gene>
<proteinExistence type="evidence at transcript level"/>
<dbReference type="EC" id="3.6.5.2" evidence="2"/>
<dbReference type="EMBL" id="D45420">
    <property type="protein sequence ID" value="BAA08259.1"/>
    <property type="molecule type" value="mRNA"/>
</dbReference>
<dbReference type="SMR" id="P51822"/>
<dbReference type="GO" id="GO:0005794">
    <property type="term" value="C:Golgi apparatus"/>
    <property type="evidence" value="ECO:0007669"/>
    <property type="project" value="UniProtKB-SubCell"/>
</dbReference>
<dbReference type="GO" id="GO:0005525">
    <property type="term" value="F:GTP binding"/>
    <property type="evidence" value="ECO:0007669"/>
    <property type="project" value="UniProtKB-KW"/>
</dbReference>
<dbReference type="GO" id="GO:0003924">
    <property type="term" value="F:GTPase activity"/>
    <property type="evidence" value="ECO:0007669"/>
    <property type="project" value="InterPro"/>
</dbReference>
<dbReference type="GO" id="GO:0015031">
    <property type="term" value="P:protein transport"/>
    <property type="evidence" value="ECO:0007669"/>
    <property type="project" value="UniProtKB-KW"/>
</dbReference>
<dbReference type="GO" id="GO:0016192">
    <property type="term" value="P:vesicle-mediated transport"/>
    <property type="evidence" value="ECO:0007669"/>
    <property type="project" value="UniProtKB-KW"/>
</dbReference>
<dbReference type="CDD" id="cd04150">
    <property type="entry name" value="Arf1_5_like"/>
    <property type="match status" value="1"/>
</dbReference>
<dbReference type="FunFam" id="3.40.50.300:FF:003500">
    <property type="entry name" value="ADP-ribosylation factor 1"/>
    <property type="match status" value="1"/>
</dbReference>
<dbReference type="Gene3D" id="3.40.50.300">
    <property type="entry name" value="P-loop containing nucleotide triphosphate hydrolases"/>
    <property type="match status" value="1"/>
</dbReference>
<dbReference type="InterPro" id="IPR045872">
    <property type="entry name" value="Arf1-5-like"/>
</dbReference>
<dbReference type="InterPro" id="IPR027417">
    <property type="entry name" value="P-loop_NTPase"/>
</dbReference>
<dbReference type="InterPro" id="IPR005225">
    <property type="entry name" value="Small_GTP-bd"/>
</dbReference>
<dbReference type="InterPro" id="IPR024156">
    <property type="entry name" value="Small_GTPase_ARF"/>
</dbReference>
<dbReference type="InterPro" id="IPR006689">
    <property type="entry name" value="Small_GTPase_ARF/SAR"/>
</dbReference>
<dbReference type="NCBIfam" id="TIGR00231">
    <property type="entry name" value="small_GTP"/>
    <property type="match status" value="1"/>
</dbReference>
<dbReference type="PANTHER" id="PTHR11711">
    <property type="entry name" value="ADP RIBOSYLATION FACTOR-RELATED"/>
    <property type="match status" value="1"/>
</dbReference>
<dbReference type="Pfam" id="PF00025">
    <property type="entry name" value="Arf"/>
    <property type="match status" value="1"/>
</dbReference>
<dbReference type="PRINTS" id="PR00328">
    <property type="entry name" value="SAR1GTPBP"/>
</dbReference>
<dbReference type="SMART" id="SM00177">
    <property type="entry name" value="ARF"/>
    <property type="match status" value="1"/>
</dbReference>
<dbReference type="SMART" id="SM00175">
    <property type="entry name" value="RAB"/>
    <property type="match status" value="1"/>
</dbReference>
<dbReference type="SMART" id="SM00178">
    <property type="entry name" value="SAR"/>
    <property type="match status" value="1"/>
</dbReference>
<dbReference type="SUPFAM" id="SSF52540">
    <property type="entry name" value="P-loop containing nucleoside triphosphate hydrolases"/>
    <property type="match status" value="1"/>
</dbReference>
<dbReference type="PROSITE" id="PS51417">
    <property type="entry name" value="ARF"/>
    <property type="match status" value="1"/>
</dbReference>
<accession>P51822</accession>